<feature type="chain" id="PRO_0000172157" description="Putative pre-16S rRNA nuclease">
    <location>
        <begin position="1"/>
        <end position="144"/>
    </location>
</feature>
<accession>Q67MW4</accession>
<proteinExistence type="inferred from homology"/>
<name>YQGF_SYMTH</name>
<protein>
    <recommendedName>
        <fullName evidence="1">Putative pre-16S rRNA nuclease</fullName>
        <ecNumber evidence="1">3.1.-.-</ecNumber>
    </recommendedName>
</protein>
<sequence length="144" mass="15997">MRIGGLDVGEKTIGVALSDELGLTAQALEVIRRRSLEQDLARLDEIARHYGVVRWVVGMPRNMNGTYGPRAELTRAFMERLAGHSGLPVEAWDERLSTMAAERVLLEADVSRARRRKVIDKMAAAVILQGYLDARAARPPESFV</sequence>
<reference key="1">
    <citation type="journal article" date="2004" name="Nucleic Acids Res.">
        <title>Genome sequence of Symbiobacterium thermophilum, an uncultivable bacterium that depends on microbial commensalism.</title>
        <authorList>
            <person name="Ueda K."/>
            <person name="Yamashita A."/>
            <person name="Ishikawa J."/>
            <person name="Shimada M."/>
            <person name="Watsuji T."/>
            <person name="Morimura K."/>
            <person name="Ikeda H."/>
            <person name="Hattori M."/>
            <person name="Beppu T."/>
        </authorList>
    </citation>
    <scope>NUCLEOTIDE SEQUENCE [LARGE SCALE GENOMIC DNA]</scope>
    <source>
        <strain>DSM 24528 / JCM 14929 / IAM 14863 / T</strain>
    </source>
</reference>
<comment type="function">
    <text evidence="1">Could be a nuclease involved in processing of the 5'-end of pre-16S rRNA.</text>
</comment>
<comment type="subcellular location">
    <subcellularLocation>
        <location evidence="1">Cytoplasm</location>
    </subcellularLocation>
</comment>
<comment type="similarity">
    <text evidence="1">Belongs to the YqgF nuclease family.</text>
</comment>
<dbReference type="EC" id="3.1.-.-" evidence="1"/>
<dbReference type="EMBL" id="AP006840">
    <property type="protein sequence ID" value="BAD40979.1"/>
    <property type="molecule type" value="Genomic_DNA"/>
</dbReference>
<dbReference type="RefSeq" id="WP_011196121.1">
    <property type="nucleotide sequence ID" value="NC_006177.1"/>
</dbReference>
<dbReference type="SMR" id="Q67MW4"/>
<dbReference type="STRING" id="292459.STH1994"/>
<dbReference type="KEGG" id="sth:STH1994"/>
<dbReference type="eggNOG" id="COG0816">
    <property type="taxonomic scope" value="Bacteria"/>
</dbReference>
<dbReference type="HOGENOM" id="CLU_098240_2_0_9"/>
<dbReference type="OrthoDB" id="9796140at2"/>
<dbReference type="Proteomes" id="UP000000417">
    <property type="component" value="Chromosome"/>
</dbReference>
<dbReference type="GO" id="GO:0005829">
    <property type="term" value="C:cytosol"/>
    <property type="evidence" value="ECO:0007669"/>
    <property type="project" value="TreeGrafter"/>
</dbReference>
<dbReference type="GO" id="GO:0004518">
    <property type="term" value="F:nuclease activity"/>
    <property type="evidence" value="ECO:0007669"/>
    <property type="project" value="UniProtKB-KW"/>
</dbReference>
<dbReference type="GO" id="GO:0000967">
    <property type="term" value="P:rRNA 5'-end processing"/>
    <property type="evidence" value="ECO:0007669"/>
    <property type="project" value="UniProtKB-UniRule"/>
</dbReference>
<dbReference type="CDD" id="cd16964">
    <property type="entry name" value="YqgF"/>
    <property type="match status" value="1"/>
</dbReference>
<dbReference type="Gene3D" id="3.30.420.140">
    <property type="entry name" value="YqgF/RNase H-like domain"/>
    <property type="match status" value="1"/>
</dbReference>
<dbReference type="HAMAP" id="MF_00651">
    <property type="entry name" value="Nuclease_YqgF"/>
    <property type="match status" value="1"/>
</dbReference>
<dbReference type="InterPro" id="IPR012337">
    <property type="entry name" value="RNaseH-like_sf"/>
</dbReference>
<dbReference type="InterPro" id="IPR005227">
    <property type="entry name" value="YqgF"/>
</dbReference>
<dbReference type="InterPro" id="IPR006641">
    <property type="entry name" value="YqgF/RNaseH-like_dom"/>
</dbReference>
<dbReference type="InterPro" id="IPR037027">
    <property type="entry name" value="YqgF/RNaseH-like_dom_sf"/>
</dbReference>
<dbReference type="NCBIfam" id="TIGR00250">
    <property type="entry name" value="RNAse_H_YqgF"/>
    <property type="match status" value="1"/>
</dbReference>
<dbReference type="PANTHER" id="PTHR33317">
    <property type="entry name" value="POLYNUCLEOTIDYL TRANSFERASE, RIBONUCLEASE H-LIKE SUPERFAMILY PROTEIN"/>
    <property type="match status" value="1"/>
</dbReference>
<dbReference type="PANTHER" id="PTHR33317:SF4">
    <property type="entry name" value="POLYNUCLEOTIDYL TRANSFERASE, RIBONUCLEASE H-LIKE SUPERFAMILY PROTEIN"/>
    <property type="match status" value="1"/>
</dbReference>
<dbReference type="Pfam" id="PF03652">
    <property type="entry name" value="RuvX"/>
    <property type="match status" value="1"/>
</dbReference>
<dbReference type="SMART" id="SM00732">
    <property type="entry name" value="YqgFc"/>
    <property type="match status" value="1"/>
</dbReference>
<dbReference type="SUPFAM" id="SSF53098">
    <property type="entry name" value="Ribonuclease H-like"/>
    <property type="match status" value="1"/>
</dbReference>
<organism>
    <name type="scientific">Symbiobacterium thermophilum (strain DSM 24528 / JCM 14929 / IAM 14863 / T)</name>
    <dbReference type="NCBI Taxonomy" id="292459"/>
    <lineage>
        <taxon>Bacteria</taxon>
        <taxon>Bacillati</taxon>
        <taxon>Bacillota</taxon>
        <taxon>Clostridia</taxon>
        <taxon>Eubacteriales</taxon>
        <taxon>Symbiobacteriaceae</taxon>
        <taxon>Symbiobacterium</taxon>
    </lineage>
</organism>
<evidence type="ECO:0000255" key="1">
    <source>
        <dbReference type="HAMAP-Rule" id="MF_00651"/>
    </source>
</evidence>
<gene>
    <name type="ordered locus">STH1994</name>
</gene>
<keyword id="KW-0963">Cytoplasm</keyword>
<keyword id="KW-0378">Hydrolase</keyword>
<keyword id="KW-0540">Nuclease</keyword>
<keyword id="KW-1185">Reference proteome</keyword>
<keyword id="KW-0690">Ribosome biogenesis</keyword>